<proteinExistence type="inferred from homology"/>
<organism>
    <name type="scientific">Shewanella loihica (strain ATCC BAA-1088 / PV-4)</name>
    <dbReference type="NCBI Taxonomy" id="323850"/>
    <lineage>
        <taxon>Bacteria</taxon>
        <taxon>Pseudomonadati</taxon>
        <taxon>Pseudomonadota</taxon>
        <taxon>Gammaproteobacteria</taxon>
        <taxon>Alteromonadales</taxon>
        <taxon>Shewanellaceae</taxon>
        <taxon>Shewanella</taxon>
    </lineage>
</organism>
<reference key="1">
    <citation type="submission" date="2007-03" db="EMBL/GenBank/DDBJ databases">
        <title>Complete sequence of Shewanella loihica PV-4.</title>
        <authorList>
            <consortium name="US DOE Joint Genome Institute"/>
            <person name="Copeland A."/>
            <person name="Lucas S."/>
            <person name="Lapidus A."/>
            <person name="Barry K."/>
            <person name="Detter J.C."/>
            <person name="Glavina del Rio T."/>
            <person name="Hammon N."/>
            <person name="Israni S."/>
            <person name="Dalin E."/>
            <person name="Tice H."/>
            <person name="Pitluck S."/>
            <person name="Chain P."/>
            <person name="Malfatti S."/>
            <person name="Shin M."/>
            <person name="Vergez L."/>
            <person name="Schmutz J."/>
            <person name="Larimer F."/>
            <person name="Land M."/>
            <person name="Hauser L."/>
            <person name="Kyrpides N."/>
            <person name="Mikhailova N."/>
            <person name="Romine M.F."/>
            <person name="Serres G."/>
            <person name="Fredrickson J."/>
            <person name="Tiedje J."/>
            <person name="Richardson P."/>
        </authorList>
    </citation>
    <scope>NUCLEOTIDE SEQUENCE [LARGE SCALE GENOMIC DNA]</scope>
    <source>
        <strain>ATCC BAA-1088 / PV-4</strain>
    </source>
</reference>
<evidence type="ECO:0000255" key="1">
    <source>
        <dbReference type="HAMAP-Rule" id="MF_01326"/>
    </source>
</evidence>
<evidence type="ECO:0000305" key="2"/>
<keyword id="KW-1185">Reference proteome</keyword>
<keyword id="KW-0687">Ribonucleoprotein</keyword>
<keyword id="KW-0689">Ribosomal protein</keyword>
<keyword id="KW-0694">RNA-binding</keyword>
<keyword id="KW-0699">rRNA-binding</keyword>
<protein>
    <recommendedName>
        <fullName evidence="1">Large ribosomal subunit protein uL24</fullName>
    </recommendedName>
    <alternativeName>
        <fullName evidence="2">50S ribosomal protein L24</fullName>
    </alternativeName>
</protein>
<accession>A3Q993</accession>
<comment type="function">
    <text evidence="1">One of two assembly initiator proteins, it binds directly to the 5'-end of the 23S rRNA, where it nucleates assembly of the 50S subunit.</text>
</comment>
<comment type="function">
    <text evidence="1">One of the proteins that surrounds the polypeptide exit tunnel on the outside of the subunit.</text>
</comment>
<comment type="subunit">
    <text evidence="1">Part of the 50S ribosomal subunit.</text>
</comment>
<comment type="similarity">
    <text evidence="1">Belongs to the universal ribosomal protein uL24 family.</text>
</comment>
<gene>
    <name evidence="1" type="primary">rplX</name>
    <name type="ordered locus">Shew_0169</name>
</gene>
<feature type="chain" id="PRO_1000052307" description="Large ribosomal subunit protein uL24">
    <location>
        <begin position="1"/>
        <end position="104"/>
    </location>
</feature>
<sequence length="104" mass="11373">MAAKIRREDEVIVLAGKDKGKRGKVSRVLPTGKLIVEGINLIKKHQKPNPQMGVTGGIVEKEAPIQASNVAIFNSATGKADRVGFRFEDGKKVRFFKSNSELVK</sequence>
<dbReference type="EMBL" id="CP000606">
    <property type="protein sequence ID" value="ABO22041.1"/>
    <property type="molecule type" value="Genomic_DNA"/>
</dbReference>
<dbReference type="RefSeq" id="WP_011863977.1">
    <property type="nucleotide sequence ID" value="NC_009092.1"/>
</dbReference>
<dbReference type="SMR" id="A3Q993"/>
<dbReference type="STRING" id="323850.Shew_0169"/>
<dbReference type="KEGG" id="slo:Shew_0169"/>
<dbReference type="eggNOG" id="COG0198">
    <property type="taxonomic scope" value="Bacteria"/>
</dbReference>
<dbReference type="HOGENOM" id="CLU_093315_2_2_6"/>
<dbReference type="OrthoDB" id="9807419at2"/>
<dbReference type="Proteomes" id="UP000001558">
    <property type="component" value="Chromosome"/>
</dbReference>
<dbReference type="GO" id="GO:1990904">
    <property type="term" value="C:ribonucleoprotein complex"/>
    <property type="evidence" value="ECO:0007669"/>
    <property type="project" value="UniProtKB-KW"/>
</dbReference>
<dbReference type="GO" id="GO:0005840">
    <property type="term" value="C:ribosome"/>
    <property type="evidence" value="ECO:0007669"/>
    <property type="project" value="UniProtKB-KW"/>
</dbReference>
<dbReference type="GO" id="GO:0019843">
    <property type="term" value="F:rRNA binding"/>
    <property type="evidence" value="ECO:0007669"/>
    <property type="project" value="UniProtKB-UniRule"/>
</dbReference>
<dbReference type="GO" id="GO:0003735">
    <property type="term" value="F:structural constituent of ribosome"/>
    <property type="evidence" value="ECO:0007669"/>
    <property type="project" value="InterPro"/>
</dbReference>
<dbReference type="GO" id="GO:0006412">
    <property type="term" value="P:translation"/>
    <property type="evidence" value="ECO:0007669"/>
    <property type="project" value="UniProtKB-UniRule"/>
</dbReference>
<dbReference type="CDD" id="cd06089">
    <property type="entry name" value="KOW_RPL26"/>
    <property type="match status" value="1"/>
</dbReference>
<dbReference type="FunFam" id="2.30.30.30:FF:000004">
    <property type="entry name" value="50S ribosomal protein L24"/>
    <property type="match status" value="1"/>
</dbReference>
<dbReference type="Gene3D" id="2.30.30.30">
    <property type="match status" value="1"/>
</dbReference>
<dbReference type="HAMAP" id="MF_01326_B">
    <property type="entry name" value="Ribosomal_uL24_B"/>
    <property type="match status" value="1"/>
</dbReference>
<dbReference type="InterPro" id="IPR005824">
    <property type="entry name" value="KOW"/>
</dbReference>
<dbReference type="InterPro" id="IPR014722">
    <property type="entry name" value="Rib_uL2_dom2"/>
</dbReference>
<dbReference type="InterPro" id="IPR003256">
    <property type="entry name" value="Ribosomal_uL24"/>
</dbReference>
<dbReference type="InterPro" id="IPR005825">
    <property type="entry name" value="Ribosomal_uL24_CS"/>
</dbReference>
<dbReference type="InterPro" id="IPR041988">
    <property type="entry name" value="Ribosomal_uL24_KOW"/>
</dbReference>
<dbReference type="InterPro" id="IPR008991">
    <property type="entry name" value="Translation_prot_SH3-like_sf"/>
</dbReference>
<dbReference type="NCBIfam" id="TIGR01079">
    <property type="entry name" value="rplX_bact"/>
    <property type="match status" value="1"/>
</dbReference>
<dbReference type="PANTHER" id="PTHR12903">
    <property type="entry name" value="MITOCHONDRIAL RIBOSOMAL PROTEIN L24"/>
    <property type="match status" value="1"/>
</dbReference>
<dbReference type="Pfam" id="PF00467">
    <property type="entry name" value="KOW"/>
    <property type="match status" value="1"/>
</dbReference>
<dbReference type="Pfam" id="PF17136">
    <property type="entry name" value="ribosomal_L24"/>
    <property type="match status" value="1"/>
</dbReference>
<dbReference type="SMART" id="SM00739">
    <property type="entry name" value="KOW"/>
    <property type="match status" value="1"/>
</dbReference>
<dbReference type="SUPFAM" id="SSF50104">
    <property type="entry name" value="Translation proteins SH3-like domain"/>
    <property type="match status" value="1"/>
</dbReference>
<dbReference type="PROSITE" id="PS01108">
    <property type="entry name" value="RIBOSOMAL_L24"/>
    <property type="match status" value="1"/>
</dbReference>
<name>RL24_SHELP</name>